<protein>
    <recommendedName>
        <fullName evidence="1">Putative pre-16S rRNA nuclease</fullName>
        <ecNumber evidence="1">3.1.-.-</ecNumber>
    </recommendedName>
</protein>
<name>YQGF_CHRVO</name>
<comment type="function">
    <text evidence="1">Could be a nuclease involved in processing of the 5'-end of pre-16S rRNA.</text>
</comment>
<comment type="subcellular location">
    <subcellularLocation>
        <location evidence="1">Cytoplasm</location>
    </subcellularLocation>
</comment>
<comment type="similarity">
    <text evidence="1">Belongs to the YqgF nuclease family.</text>
</comment>
<feature type="chain" id="PRO_0000172048" description="Putative pre-16S rRNA nuclease">
    <location>
        <begin position="1"/>
        <end position="137"/>
    </location>
</feature>
<accession>Q7NR74</accession>
<organism>
    <name type="scientific">Chromobacterium violaceum (strain ATCC 12472 / DSM 30191 / JCM 1249 / CCUG 213 / NBRC 12614 / NCIMB 9131 / NCTC 9757 / MK)</name>
    <dbReference type="NCBI Taxonomy" id="243365"/>
    <lineage>
        <taxon>Bacteria</taxon>
        <taxon>Pseudomonadati</taxon>
        <taxon>Pseudomonadota</taxon>
        <taxon>Betaproteobacteria</taxon>
        <taxon>Neisseriales</taxon>
        <taxon>Chromobacteriaceae</taxon>
        <taxon>Chromobacterium</taxon>
    </lineage>
</organism>
<evidence type="ECO:0000255" key="1">
    <source>
        <dbReference type="HAMAP-Rule" id="MF_00651"/>
    </source>
</evidence>
<gene>
    <name type="ordered locus">CV_3910</name>
</gene>
<proteinExistence type="inferred from homology"/>
<keyword id="KW-0963">Cytoplasm</keyword>
<keyword id="KW-0378">Hydrolase</keyword>
<keyword id="KW-0540">Nuclease</keyword>
<keyword id="KW-1185">Reference proteome</keyword>
<keyword id="KW-0690">Ribosome biogenesis</keyword>
<sequence>MAFDFGERRIGVAVGDTILGIPHPLATIDTAVTDERFAAIARLIEEWQPRQLVVGLPMHPDGEEHELSALSRRFANRLKGRFGLPVWLVDERYTSVIAEQLLEEAGVKKGRKQKPALDQVAAQAILAGWFEQPGTAV</sequence>
<reference key="1">
    <citation type="journal article" date="2003" name="Proc. Natl. Acad. Sci. U.S.A.">
        <title>The complete genome sequence of Chromobacterium violaceum reveals remarkable and exploitable bacterial adaptability.</title>
        <authorList>
            <person name="Vasconcelos A.T.R."/>
            <person name="de Almeida D.F."/>
            <person name="Hungria M."/>
            <person name="Guimaraes C.T."/>
            <person name="Antonio R.V."/>
            <person name="Almeida F.C."/>
            <person name="de Almeida L.G.P."/>
            <person name="de Almeida R."/>
            <person name="Alves-Gomes J.A."/>
            <person name="Andrade E.M."/>
            <person name="Araripe J."/>
            <person name="de Araujo M.F.F."/>
            <person name="Astolfi-Filho S."/>
            <person name="Azevedo V."/>
            <person name="Baptista A.J."/>
            <person name="Bataus L.A.M."/>
            <person name="Batista J.S."/>
            <person name="Belo A."/>
            <person name="van den Berg C."/>
            <person name="Bogo M."/>
            <person name="Bonatto S."/>
            <person name="Bordignon J."/>
            <person name="Brigido M.M."/>
            <person name="Brito C.A."/>
            <person name="Brocchi M."/>
            <person name="Burity H.A."/>
            <person name="Camargo A.A."/>
            <person name="Cardoso D.D.P."/>
            <person name="Carneiro N.P."/>
            <person name="Carraro D.M."/>
            <person name="Carvalho C.M.B."/>
            <person name="Cascardo J.C.M."/>
            <person name="Cavada B.S."/>
            <person name="Chueire L.M.O."/>
            <person name="Creczynski-Pasa T.B."/>
            <person name="Cunha-Junior N.C."/>
            <person name="Fagundes N."/>
            <person name="Falcao C.L."/>
            <person name="Fantinatti F."/>
            <person name="Farias I.P."/>
            <person name="Felipe M.S.S."/>
            <person name="Ferrari L.P."/>
            <person name="Ferro J.A."/>
            <person name="Ferro M.I.T."/>
            <person name="Franco G.R."/>
            <person name="Freitas N.S.A."/>
            <person name="Furlan L.R."/>
            <person name="Gazzinelli R.T."/>
            <person name="Gomes E.A."/>
            <person name="Goncalves P.R."/>
            <person name="Grangeiro T.B."/>
            <person name="Grattapaglia D."/>
            <person name="Grisard E.C."/>
            <person name="Hanna E.S."/>
            <person name="Jardim S.N."/>
            <person name="Laurino J."/>
            <person name="Leoi L.C.T."/>
            <person name="Lima L.F.A."/>
            <person name="Loureiro M.F."/>
            <person name="Lyra M.C.C.P."/>
            <person name="Madeira H.M.F."/>
            <person name="Manfio G.P."/>
            <person name="Maranhao A.Q."/>
            <person name="Martins W.S."/>
            <person name="di Mauro S.M.Z."/>
            <person name="de Medeiros S.R.B."/>
            <person name="Meissner R.V."/>
            <person name="Moreira M.A.M."/>
            <person name="Nascimento F.F."/>
            <person name="Nicolas M.F."/>
            <person name="Oliveira J.G."/>
            <person name="Oliveira S.C."/>
            <person name="Paixao R.F.C."/>
            <person name="Parente J.A."/>
            <person name="Pedrosa F.O."/>
            <person name="Pena S.D.J."/>
            <person name="Pereira J.O."/>
            <person name="Pereira M."/>
            <person name="Pinto L.S.R.C."/>
            <person name="Pinto L.S."/>
            <person name="Porto J.I.R."/>
            <person name="Potrich D.P."/>
            <person name="Ramalho-Neto C.E."/>
            <person name="Reis A.M.M."/>
            <person name="Rigo L.U."/>
            <person name="Rondinelli E."/>
            <person name="Santos E.B.P."/>
            <person name="Santos F.R."/>
            <person name="Schneider M.P.C."/>
            <person name="Seuanez H.N."/>
            <person name="Silva A.M.R."/>
            <person name="da Silva A.L.C."/>
            <person name="Silva D.W."/>
            <person name="Silva R."/>
            <person name="Simoes I.C."/>
            <person name="Simon D."/>
            <person name="Soares C.M.A."/>
            <person name="Soares R.B.A."/>
            <person name="Souza E.M."/>
            <person name="Souza K.R.L."/>
            <person name="Souza R.C."/>
            <person name="Steffens M.B.R."/>
            <person name="Steindel M."/>
            <person name="Teixeira S.R."/>
            <person name="Urmenyi T."/>
            <person name="Vettore A."/>
            <person name="Wassem R."/>
            <person name="Zaha A."/>
            <person name="Simpson A.J.G."/>
        </authorList>
    </citation>
    <scope>NUCLEOTIDE SEQUENCE [LARGE SCALE GENOMIC DNA]</scope>
    <source>
        <strain>ATCC 12472 / DSM 30191 / JCM 1249 / CCUG 213 / NBRC 12614 / NCIMB 9131 / NCTC 9757 / MK</strain>
    </source>
</reference>
<dbReference type="EC" id="3.1.-.-" evidence="1"/>
<dbReference type="EMBL" id="AE016825">
    <property type="protein sequence ID" value="AAQ61571.1"/>
    <property type="molecule type" value="Genomic_DNA"/>
</dbReference>
<dbReference type="SMR" id="Q7NR74"/>
<dbReference type="STRING" id="243365.CV_3910"/>
<dbReference type="KEGG" id="cvi:CV_3910"/>
<dbReference type="eggNOG" id="COG0816">
    <property type="taxonomic scope" value="Bacteria"/>
</dbReference>
<dbReference type="HOGENOM" id="CLU_098240_3_2_4"/>
<dbReference type="Proteomes" id="UP000001424">
    <property type="component" value="Chromosome"/>
</dbReference>
<dbReference type="GO" id="GO:0005829">
    <property type="term" value="C:cytosol"/>
    <property type="evidence" value="ECO:0007669"/>
    <property type="project" value="TreeGrafter"/>
</dbReference>
<dbReference type="GO" id="GO:0004518">
    <property type="term" value="F:nuclease activity"/>
    <property type="evidence" value="ECO:0007669"/>
    <property type="project" value="UniProtKB-KW"/>
</dbReference>
<dbReference type="GO" id="GO:0000967">
    <property type="term" value="P:rRNA 5'-end processing"/>
    <property type="evidence" value="ECO:0007669"/>
    <property type="project" value="UniProtKB-UniRule"/>
</dbReference>
<dbReference type="CDD" id="cd16964">
    <property type="entry name" value="YqgF"/>
    <property type="match status" value="1"/>
</dbReference>
<dbReference type="Gene3D" id="3.30.420.140">
    <property type="entry name" value="YqgF/RNase H-like domain"/>
    <property type="match status" value="1"/>
</dbReference>
<dbReference type="HAMAP" id="MF_00651">
    <property type="entry name" value="Nuclease_YqgF"/>
    <property type="match status" value="1"/>
</dbReference>
<dbReference type="InterPro" id="IPR012337">
    <property type="entry name" value="RNaseH-like_sf"/>
</dbReference>
<dbReference type="InterPro" id="IPR005227">
    <property type="entry name" value="YqgF"/>
</dbReference>
<dbReference type="InterPro" id="IPR006641">
    <property type="entry name" value="YqgF/RNaseH-like_dom"/>
</dbReference>
<dbReference type="InterPro" id="IPR037027">
    <property type="entry name" value="YqgF/RNaseH-like_dom_sf"/>
</dbReference>
<dbReference type="NCBIfam" id="TIGR00250">
    <property type="entry name" value="RNAse_H_YqgF"/>
    <property type="match status" value="1"/>
</dbReference>
<dbReference type="PANTHER" id="PTHR33317">
    <property type="entry name" value="POLYNUCLEOTIDYL TRANSFERASE, RIBONUCLEASE H-LIKE SUPERFAMILY PROTEIN"/>
    <property type="match status" value="1"/>
</dbReference>
<dbReference type="PANTHER" id="PTHR33317:SF4">
    <property type="entry name" value="POLYNUCLEOTIDYL TRANSFERASE, RIBONUCLEASE H-LIKE SUPERFAMILY PROTEIN"/>
    <property type="match status" value="1"/>
</dbReference>
<dbReference type="Pfam" id="PF03652">
    <property type="entry name" value="RuvX"/>
    <property type="match status" value="1"/>
</dbReference>
<dbReference type="SMART" id="SM00732">
    <property type="entry name" value="YqgFc"/>
    <property type="match status" value="1"/>
</dbReference>
<dbReference type="SUPFAM" id="SSF53098">
    <property type="entry name" value="Ribonuclease H-like"/>
    <property type="match status" value="1"/>
</dbReference>